<accession>P80613</accession>
<proteinExistence type="evidence at protein level"/>
<keyword id="KW-0903">Direct protein sequencing</keyword>
<keyword id="KW-1185">Reference proteome</keyword>
<sequence length="22" mass="2287">IILELAAVDSASGKLLINGNFK</sequence>
<name>UC07_MAIZE</name>
<protein>
    <recommendedName>
        <fullName>Unknown protein from spot 168 of 2D-PAGE of etiolated coleoptile</fullName>
    </recommendedName>
</protein>
<comment type="miscellaneous">
    <text>On the 2D-gel the determined pI of this unknown protein is: 6.3, its MW is: 48.9 kDa.</text>
</comment>
<comment type="caution">
    <text evidence="1">The order of the peptides shown is unknown.</text>
</comment>
<dbReference type="MaizeGDB" id="123932"/>
<dbReference type="InParanoid" id="P80613"/>
<dbReference type="Proteomes" id="UP000007305">
    <property type="component" value="Unplaced"/>
</dbReference>
<reference key="1">
    <citation type="journal article" date="1996" name="Theor. Appl. Genet.">
        <title>The maize two dimensional gel protein database: towards an integrated genome analysis program.</title>
        <authorList>
            <person name="Touzet P."/>
            <person name="Riccardi F."/>
            <person name="Morin C."/>
            <person name="Damerval C."/>
            <person name="Huet J.-C."/>
            <person name="Pernollet J.-C."/>
            <person name="Zivy M."/>
            <person name="de Vienne D."/>
        </authorList>
        <dbReference type="AGRICOLA" id="IND20551642"/>
    </citation>
    <scope>PROTEIN SEQUENCE</scope>
    <source>
        <tissue>Coleoptile</tissue>
    </source>
</reference>
<feature type="chain" id="PRO_0000055505" description="Unknown protein from spot 168 of 2D-PAGE of etiolated coleoptile">
    <location>
        <begin position="1" status="less than"/>
        <end position="22" status="greater than"/>
    </location>
</feature>
<feature type="non-consecutive residues" evidence="1">
    <location>
        <begin position="14"/>
        <end position="15"/>
    </location>
</feature>
<feature type="non-terminal residue">
    <location>
        <position position="1"/>
    </location>
</feature>
<feature type="non-terminal residue">
    <location>
        <position position="22"/>
    </location>
</feature>
<evidence type="ECO:0000305" key="1"/>
<organism>
    <name type="scientific">Zea mays</name>
    <name type="common">Maize</name>
    <dbReference type="NCBI Taxonomy" id="4577"/>
    <lineage>
        <taxon>Eukaryota</taxon>
        <taxon>Viridiplantae</taxon>
        <taxon>Streptophyta</taxon>
        <taxon>Embryophyta</taxon>
        <taxon>Tracheophyta</taxon>
        <taxon>Spermatophyta</taxon>
        <taxon>Magnoliopsida</taxon>
        <taxon>Liliopsida</taxon>
        <taxon>Poales</taxon>
        <taxon>Poaceae</taxon>
        <taxon>PACMAD clade</taxon>
        <taxon>Panicoideae</taxon>
        <taxon>Andropogonodae</taxon>
        <taxon>Andropogoneae</taxon>
        <taxon>Tripsacinae</taxon>
        <taxon>Zea</taxon>
    </lineage>
</organism>